<sequence length="127" mass="14237">MPEVAVKGATISKKGFKKAVTKTQKKEGRKRKRCRKESYSIYIYKVLKQVHPDTGISSKAMSIMNSFVTDIFERIASEASRLAHYNKRSTITSREIQTAVRLLLPGELAKHAVSEGTKAVTKYTSSK</sequence>
<evidence type="ECO:0000250" key="1">
    <source>
        <dbReference type="UniProtKB" id="P23527"/>
    </source>
</evidence>
<evidence type="ECO:0000250" key="2">
    <source>
        <dbReference type="UniProtKB" id="P33778"/>
    </source>
</evidence>
<evidence type="ECO:0000250" key="3">
    <source>
        <dbReference type="UniProtKB" id="P58876"/>
    </source>
</evidence>
<evidence type="ECO:0000250" key="4">
    <source>
        <dbReference type="UniProtKB" id="P62807"/>
    </source>
</evidence>
<evidence type="ECO:0000250" key="5">
    <source>
        <dbReference type="UniProtKB" id="Q00729"/>
    </source>
</evidence>
<evidence type="ECO:0000250" key="6">
    <source>
        <dbReference type="UniProtKB" id="Q5QNW6"/>
    </source>
</evidence>
<evidence type="ECO:0000250" key="7">
    <source>
        <dbReference type="UniProtKB" id="Q64475"/>
    </source>
</evidence>
<evidence type="ECO:0000250" key="8">
    <source>
        <dbReference type="UniProtKB" id="Q96A08"/>
    </source>
</evidence>
<evidence type="ECO:0000269" key="9">
    <source>
    </source>
</evidence>
<evidence type="ECO:0000269" key="10">
    <source>
    </source>
</evidence>
<evidence type="ECO:0000269" key="11">
    <source>
    </source>
</evidence>
<evidence type="ECO:0000269" key="12">
    <source>
    </source>
</evidence>
<evidence type="ECO:0000269" key="13">
    <source>
    </source>
</evidence>
<evidence type="ECO:0000303" key="14">
    <source>
    </source>
</evidence>
<evidence type="ECO:0000305" key="15"/>
<evidence type="ECO:0000312" key="16">
    <source>
        <dbReference type="MGI" id="MGI:2448375"/>
    </source>
</evidence>
<evidence type="ECO:0007829" key="17">
    <source>
        <dbReference type="PDB" id="3X1T"/>
    </source>
</evidence>
<evidence type="ECO:0007829" key="18">
    <source>
        <dbReference type="PDB" id="3X1V"/>
    </source>
</evidence>
<reference key="1">
    <citation type="journal article" date="1996" name="DNA Cell Biol.">
        <title>Molecular cloning of mouse somatic and testis-specific H2B histone genes containing a methylated CpG island.</title>
        <authorList>
            <person name="Choi Y.C."/>
            <person name="Gu W."/>
            <person name="Hecht N.B."/>
            <person name="Feinberg A.P."/>
            <person name="Chae C.-B."/>
        </authorList>
    </citation>
    <scope>NUCLEOTIDE SEQUENCE [GENOMIC DNA]</scope>
    <scope>TISSUE SPECIFICITY</scope>
    <source>
        <tissue>Kidney</tissue>
    </source>
</reference>
<reference key="2">
    <citation type="journal article" date="2002" name="Genomics">
        <title>The human and mouse replication-dependent histone genes.</title>
        <authorList>
            <person name="Marzluff W.F."/>
            <person name="Gongidi P."/>
            <person name="Woods K.R."/>
            <person name="Jin J."/>
            <person name="Maltais L.J."/>
        </authorList>
    </citation>
    <scope>NUCLEOTIDE SEQUENCE [GENOMIC DNA]</scope>
</reference>
<reference key="3">
    <citation type="journal article" date="2009" name="PLoS Biol.">
        <title>Lineage-specific biology revealed by a finished genome assembly of the mouse.</title>
        <authorList>
            <person name="Church D.M."/>
            <person name="Goodstadt L."/>
            <person name="Hillier L.W."/>
            <person name="Zody M.C."/>
            <person name="Goldstein S."/>
            <person name="She X."/>
            <person name="Bult C.J."/>
            <person name="Agarwala R."/>
            <person name="Cherry J.L."/>
            <person name="DiCuccio M."/>
            <person name="Hlavina W."/>
            <person name="Kapustin Y."/>
            <person name="Meric P."/>
            <person name="Maglott D."/>
            <person name="Birtle Z."/>
            <person name="Marques A.C."/>
            <person name="Graves T."/>
            <person name="Zhou S."/>
            <person name="Teague B."/>
            <person name="Potamousis K."/>
            <person name="Churas C."/>
            <person name="Place M."/>
            <person name="Herschleb J."/>
            <person name="Runnheim R."/>
            <person name="Forrest D."/>
            <person name="Amos-Landgraf J."/>
            <person name="Schwartz D.C."/>
            <person name="Cheng Z."/>
            <person name="Lindblad-Toh K."/>
            <person name="Eichler E.E."/>
            <person name="Ponting C.P."/>
        </authorList>
    </citation>
    <scope>NUCLEOTIDE SEQUENCE [LARGE SCALE GENOMIC DNA]</scope>
    <source>
        <strain>C57BL/6J</strain>
    </source>
</reference>
<reference key="4">
    <citation type="journal article" date="2010" name="Cell">
        <title>A tissue-specific atlas of mouse protein phosphorylation and expression.</title>
        <authorList>
            <person name="Huttlin E.L."/>
            <person name="Jedrychowski M.P."/>
            <person name="Elias J.E."/>
            <person name="Goswami T."/>
            <person name="Rad R."/>
            <person name="Beausoleil S.A."/>
            <person name="Villen J."/>
            <person name="Haas W."/>
            <person name="Sowa M.E."/>
            <person name="Gygi S.P."/>
        </authorList>
    </citation>
    <scope>IDENTIFICATION BY MASS SPECTROMETRY [LARGE SCALE ANALYSIS]</scope>
    <source>
        <tissue>Testis</tissue>
    </source>
</reference>
<reference key="5">
    <citation type="journal article" date="2011" name="Cell">
        <title>Identification of 67 histone marks and histone lysine crotonylation as a new type of histone modification.</title>
        <authorList>
            <person name="Tan M."/>
            <person name="Luo H."/>
            <person name="Lee S."/>
            <person name="Jin F."/>
            <person name="Yang J.S."/>
            <person name="Montellier E."/>
            <person name="Buchou T."/>
            <person name="Cheng Z."/>
            <person name="Rousseaux S."/>
            <person name="Rajagopal N."/>
            <person name="Lu Z."/>
            <person name="Ye Z."/>
            <person name="Zhu Q."/>
            <person name="Wysocka J."/>
            <person name="Ye Y."/>
            <person name="Khochbin S."/>
            <person name="Ren B."/>
            <person name="Zhao Y."/>
        </authorList>
    </citation>
    <scope>CROTONYLATION AT LYS-7; LYS-13; LYS-14; LYS-17; LYS-18; LYS-22; LYS-25 AND LYS-36</scope>
</reference>
<reference key="6">
    <citation type="journal article" date="2013" name="Genes Dev.">
        <title>Chromatin-to-nucleoprotamine transition is controlled by the histone H2B variant TH2B.</title>
        <authorList>
            <person name="Montellier E."/>
            <person name="Boussouar F."/>
            <person name="Rousseaux S."/>
            <person name="Zhang K."/>
            <person name="Buchou T."/>
            <person name="Fenaille F."/>
            <person name="Shiota H."/>
            <person name="Debernardi A."/>
            <person name="Hery P."/>
            <person name="Curtet S."/>
            <person name="Jamshidikia M."/>
            <person name="Barral S."/>
            <person name="Holota H."/>
            <person name="Bergon A."/>
            <person name="Lopez F."/>
            <person name="Guardiola P."/>
            <person name="Pernet K."/>
            <person name="Imbert J."/>
            <person name="Petosa C."/>
            <person name="Tan M."/>
            <person name="Zhao Y."/>
            <person name="Gerard M."/>
            <person name="Khochbin S."/>
        </authorList>
    </citation>
    <scope>FUNCTION</scope>
    <scope>SUBCELLULAR LOCATION</scope>
    <scope>SUBUNIT</scope>
    <scope>TISSUE SPECIFICITY</scope>
    <scope>DEVELOPMENTAL STAGE</scope>
</reference>
<reference key="7">
    <citation type="journal article" date="2017" name="Mol. Cell">
        <title>Histone variant H2A.L.2 guides transition protein-dependent protamine assembly in male germ cells.</title>
        <authorList>
            <person name="Barral S."/>
            <person name="Morozumi Y."/>
            <person name="Tanaka H."/>
            <person name="Montellier E."/>
            <person name="Govin J."/>
            <person name="de Dieuleveult M."/>
            <person name="Charbonnier G."/>
            <person name="Coute Y."/>
            <person name="Puthier D."/>
            <person name="Buchou T."/>
            <person name="Boussouar F."/>
            <person name="Urahama T."/>
            <person name="Fenaille F."/>
            <person name="Curtet S."/>
            <person name="Hery P."/>
            <person name="Fernandez-Nunez N."/>
            <person name="Shiota H."/>
            <person name="Gerard M."/>
            <person name="Rousseaux S."/>
            <person name="Kurumizaka H."/>
            <person name="Khochbin S."/>
        </authorList>
    </citation>
    <scope>FUNCTION</scope>
    <scope>INTERACTION WITH H2AB1</scope>
</reference>
<reference key="8">
    <citation type="journal article" date="2019" name="Nature">
        <title>Metabolic regulation of gene expression by histone lactylation.</title>
        <authorList>
            <person name="Zhang D."/>
            <person name="Tang Z."/>
            <person name="Huang H."/>
            <person name="Zhou G."/>
            <person name="Cui C."/>
            <person name="Weng Y."/>
            <person name="Liu W."/>
            <person name="Kim S."/>
            <person name="Lee S."/>
            <person name="Perez-Neut M."/>
            <person name="Ding J."/>
            <person name="Czyz D."/>
            <person name="Hu R."/>
            <person name="Ye Z."/>
            <person name="He M."/>
            <person name="Zheng Y.G."/>
            <person name="Shuman H.A."/>
            <person name="Dai L."/>
            <person name="Ren B."/>
            <person name="Roeder R.G."/>
            <person name="Becker L."/>
            <person name="Zhao Y."/>
        </authorList>
    </citation>
    <scope>LACTYLATION AT LYS-6; LYS-12; LYS-16; LYS-17; LYS-21; LYS-86; LYS-109 AND LYS-117</scope>
</reference>
<proteinExistence type="evidence at protein level"/>
<accession>P70696</accession>
<accession>Q5NCL9</accession>
<protein>
    <recommendedName>
        <fullName>Histone H2B type 1-A</fullName>
    </recommendedName>
    <alternativeName>
        <fullName>Histone H2B, testis</fullName>
    </alternativeName>
    <alternativeName>
        <fullName evidence="14">Testis-specific histone H2B</fullName>
    </alternativeName>
</protein>
<dbReference type="EMBL" id="X90778">
    <property type="protein sequence ID" value="CAA62299.1"/>
    <property type="molecule type" value="Genomic_DNA"/>
</dbReference>
<dbReference type="EMBL" id="AY158939">
    <property type="protein sequence ID" value="AAO06249.1"/>
    <property type="molecule type" value="Genomic_DNA"/>
</dbReference>
<dbReference type="EMBL" id="AL606464">
    <property type="status" value="NOT_ANNOTATED_CDS"/>
    <property type="molecule type" value="Genomic_DNA"/>
</dbReference>
<dbReference type="CCDS" id="CCDS26373.1"/>
<dbReference type="RefSeq" id="NP_783594.1">
    <property type="nucleotide sequence ID" value="NM_175663.2"/>
</dbReference>
<dbReference type="PDB" id="3X1T">
    <property type="method" value="X-ray"/>
    <property type="resolution" value="2.81 A"/>
    <property type="chains" value="D/H=2-127"/>
</dbReference>
<dbReference type="PDB" id="3X1V">
    <property type="method" value="X-ray"/>
    <property type="resolution" value="2.92 A"/>
    <property type="chains" value="D/H=2-127"/>
</dbReference>
<dbReference type="PDBsum" id="3X1T"/>
<dbReference type="PDBsum" id="3X1V"/>
<dbReference type="SMR" id="P70696"/>
<dbReference type="BioGRID" id="235096">
    <property type="interactions" value="2"/>
</dbReference>
<dbReference type="CORUM" id="P70696"/>
<dbReference type="FunCoup" id="P70696">
    <property type="interactions" value="500"/>
</dbReference>
<dbReference type="IntAct" id="P70696">
    <property type="interactions" value="1"/>
</dbReference>
<dbReference type="MINT" id="P70696"/>
<dbReference type="STRING" id="10090.ENSMUSP00000056604"/>
<dbReference type="GlyGen" id="P70696">
    <property type="glycosylation" value="1 site, 1 O-linked glycan (1 site)"/>
</dbReference>
<dbReference type="iPTMnet" id="P70696"/>
<dbReference type="PhosphoSitePlus" id="P70696"/>
<dbReference type="SwissPalm" id="P70696"/>
<dbReference type="jPOST" id="P70696"/>
<dbReference type="PaxDb" id="10090-ENSMUSP00000056604"/>
<dbReference type="PeptideAtlas" id="P70696"/>
<dbReference type="ProteomicsDB" id="269793"/>
<dbReference type="Pumba" id="P70696"/>
<dbReference type="TopDownProteomics" id="P70696"/>
<dbReference type="Antibodypedia" id="3172">
    <property type="antibodies" value="305 antibodies from 21 providers"/>
</dbReference>
<dbReference type="DNASU" id="319177"/>
<dbReference type="Ensembl" id="ENSMUST00000052776.4">
    <property type="protein sequence ID" value="ENSMUSP00000056604.3"/>
    <property type="gene ID" value="ENSMUSG00000050799.4"/>
</dbReference>
<dbReference type="GeneID" id="319177"/>
<dbReference type="KEGG" id="mmu:319177"/>
<dbReference type="UCSC" id="uc007pvi.2">
    <property type="organism name" value="mouse"/>
</dbReference>
<dbReference type="AGR" id="MGI:2448375"/>
<dbReference type="CTD" id="255626"/>
<dbReference type="MGI" id="MGI:2448375">
    <property type="gene designation" value="H2bc1"/>
</dbReference>
<dbReference type="VEuPathDB" id="HostDB:ENSMUSG00000050799"/>
<dbReference type="eggNOG" id="KOG1744">
    <property type="taxonomic scope" value="Eukaryota"/>
</dbReference>
<dbReference type="GeneTree" id="ENSGT01110000267181"/>
<dbReference type="HOGENOM" id="CLU_075666_2_1_1"/>
<dbReference type="InParanoid" id="P70696"/>
<dbReference type="OMA" id="ELAKHAX"/>
<dbReference type="OrthoDB" id="9832711at2759"/>
<dbReference type="PhylomeDB" id="P70696"/>
<dbReference type="TreeFam" id="TF300212"/>
<dbReference type="Reactome" id="R-MMU-110330">
    <property type="pathway name" value="Recognition and association of DNA glycosylase with site containing an affected purine"/>
</dbReference>
<dbReference type="Reactome" id="R-MMU-110331">
    <property type="pathway name" value="Cleavage of the damaged purine"/>
</dbReference>
<dbReference type="Reactome" id="R-MMU-212300">
    <property type="pathway name" value="PRC2 methylates histones and DNA"/>
</dbReference>
<dbReference type="Reactome" id="R-MMU-2299718">
    <property type="pathway name" value="Condensation of Prophase Chromosomes"/>
</dbReference>
<dbReference type="Reactome" id="R-MMU-2559586">
    <property type="pathway name" value="DNA Damage/Telomere Stress Induced Senescence"/>
</dbReference>
<dbReference type="Reactome" id="R-MMU-3214815">
    <property type="pathway name" value="HDACs deacetylate histones"/>
</dbReference>
<dbReference type="Reactome" id="R-MMU-3214847">
    <property type="pathway name" value="HATs acetylate histones"/>
</dbReference>
<dbReference type="Reactome" id="R-MMU-5693565">
    <property type="pathway name" value="Recruitment and ATM-mediated phosphorylation of repair and signaling proteins at DNA double strand breaks"/>
</dbReference>
<dbReference type="Reactome" id="R-MMU-5693571">
    <property type="pathway name" value="Nonhomologous End-Joining (NHEJ)"/>
</dbReference>
<dbReference type="Reactome" id="R-MMU-5693607">
    <property type="pathway name" value="Processing of DNA double-strand break ends"/>
</dbReference>
<dbReference type="Reactome" id="R-MMU-606279">
    <property type="pathway name" value="Deposition of new CENPA-containing nucleosomes at the centromere"/>
</dbReference>
<dbReference type="Reactome" id="R-MMU-69473">
    <property type="pathway name" value="G2/M DNA damage checkpoint"/>
</dbReference>
<dbReference type="Reactome" id="R-MMU-8866654">
    <property type="pathway name" value="E3 ubiquitin ligases ubiquitinate target proteins"/>
</dbReference>
<dbReference type="Reactome" id="R-MMU-8936459">
    <property type="pathway name" value="RUNX1 regulates genes involved in megakaryocyte differentiation and platelet function"/>
</dbReference>
<dbReference type="Reactome" id="R-MMU-9018519">
    <property type="pathway name" value="Estrogen-dependent gene expression"/>
</dbReference>
<dbReference type="Reactome" id="R-MMU-9670095">
    <property type="pathway name" value="Inhibition of DNA recombination at telomere"/>
</dbReference>
<dbReference type="Reactome" id="R-MMU-9841922">
    <property type="pathway name" value="MLL4 and MLL3 complexes regulate expression of PPARG target genes in adipogenesis and hepatic steatosis"/>
</dbReference>
<dbReference type="Reactome" id="R-MMU-9843940">
    <property type="pathway name" value="Regulation of endogenous retroelements by KRAB-ZFP proteins"/>
</dbReference>
<dbReference type="BioGRID-ORCS" id="319177">
    <property type="hits" value="8 hits in 79 CRISPR screens"/>
</dbReference>
<dbReference type="EvolutionaryTrace" id="P70696"/>
<dbReference type="PRO" id="PR:P70696"/>
<dbReference type="Proteomes" id="UP000000589">
    <property type="component" value="Chromosome 13"/>
</dbReference>
<dbReference type="RNAct" id="P70696">
    <property type="molecule type" value="protein"/>
</dbReference>
<dbReference type="Bgee" id="ENSMUSG00000050799">
    <property type="expression patterns" value="Expressed in spermatocyte and 14 other cell types or tissues"/>
</dbReference>
<dbReference type="GO" id="GO:0009986">
    <property type="term" value="C:cell surface"/>
    <property type="evidence" value="ECO:0000314"/>
    <property type="project" value="MGI"/>
</dbReference>
<dbReference type="GO" id="GO:0001674">
    <property type="term" value="C:female germ cell nucleus"/>
    <property type="evidence" value="ECO:0000314"/>
    <property type="project" value="MGI"/>
</dbReference>
<dbReference type="GO" id="GO:0005654">
    <property type="term" value="C:nucleoplasm"/>
    <property type="evidence" value="ECO:0000304"/>
    <property type="project" value="Reactome"/>
</dbReference>
<dbReference type="GO" id="GO:0000786">
    <property type="term" value="C:nucleosome"/>
    <property type="evidence" value="ECO:0000314"/>
    <property type="project" value="UniProtKB"/>
</dbReference>
<dbReference type="GO" id="GO:0005634">
    <property type="term" value="C:nucleus"/>
    <property type="evidence" value="ECO:0000314"/>
    <property type="project" value="MGI"/>
</dbReference>
<dbReference type="GO" id="GO:0003677">
    <property type="term" value="F:DNA binding"/>
    <property type="evidence" value="ECO:0007669"/>
    <property type="project" value="UniProtKB-KW"/>
</dbReference>
<dbReference type="GO" id="GO:0042393">
    <property type="term" value="F:histone binding"/>
    <property type="evidence" value="ECO:0000314"/>
    <property type="project" value="MGI"/>
</dbReference>
<dbReference type="GO" id="GO:0046982">
    <property type="term" value="F:protein heterodimerization activity"/>
    <property type="evidence" value="ECO:0007669"/>
    <property type="project" value="InterPro"/>
</dbReference>
<dbReference type="GO" id="GO:0030527">
    <property type="term" value="F:structural constituent of chromatin"/>
    <property type="evidence" value="ECO:0007669"/>
    <property type="project" value="InterPro"/>
</dbReference>
<dbReference type="GO" id="GO:0006325">
    <property type="term" value="P:chromatin organization"/>
    <property type="evidence" value="ECO:0000314"/>
    <property type="project" value="MGI"/>
</dbReference>
<dbReference type="GO" id="GO:0051276">
    <property type="term" value="P:chromosome organization"/>
    <property type="evidence" value="ECO:0000314"/>
    <property type="project" value="MGI"/>
</dbReference>
<dbReference type="GO" id="GO:0006954">
    <property type="term" value="P:inflammatory response"/>
    <property type="evidence" value="ECO:0000315"/>
    <property type="project" value="MGI"/>
</dbReference>
<dbReference type="GO" id="GO:0071674">
    <property type="term" value="P:mononuclear cell migration"/>
    <property type="evidence" value="ECO:0000315"/>
    <property type="project" value="MGI"/>
</dbReference>
<dbReference type="GO" id="GO:0006334">
    <property type="term" value="P:nucleosome assembly"/>
    <property type="evidence" value="ECO:0000314"/>
    <property type="project" value="MGI"/>
</dbReference>
<dbReference type="GO" id="GO:0006337">
    <property type="term" value="P:nucleosome disassembly"/>
    <property type="evidence" value="ECO:0000315"/>
    <property type="project" value="UniProtKB"/>
</dbReference>
<dbReference type="GO" id="GO:0031639">
    <property type="term" value="P:plasminogen activation"/>
    <property type="evidence" value="ECO:0000315"/>
    <property type="project" value="MGI"/>
</dbReference>
<dbReference type="GO" id="GO:0035092">
    <property type="term" value="P:sperm DNA condensation"/>
    <property type="evidence" value="ECO:0000315"/>
    <property type="project" value="UniProtKB"/>
</dbReference>
<dbReference type="CDD" id="cd22910">
    <property type="entry name" value="HFD_H2B"/>
    <property type="match status" value="1"/>
</dbReference>
<dbReference type="FunFam" id="1.10.20.10:FF:000003">
    <property type="entry name" value="Histone H2B"/>
    <property type="match status" value="1"/>
</dbReference>
<dbReference type="Gene3D" id="1.10.20.10">
    <property type="entry name" value="Histone, subunit A"/>
    <property type="match status" value="1"/>
</dbReference>
<dbReference type="InterPro" id="IPR009072">
    <property type="entry name" value="Histone-fold"/>
</dbReference>
<dbReference type="InterPro" id="IPR007125">
    <property type="entry name" value="Histone_H2A/H2B/H3"/>
</dbReference>
<dbReference type="InterPro" id="IPR000558">
    <property type="entry name" value="Histone_H2B"/>
</dbReference>
<dbReference type="InterPro" id="IPR055333">
    <property type="entry name" value="HISTONE_H2B_site"/>
</dbReference>
<dbReference type="PANTHER" id="PTHR23428">
    <property type="entry name" value="HISTONE H2B"/>
    <property type="match status" value="1"/>
</dbReference>
<dbReference type="Pfam" id="PF00125">
    <property type="entry name" value="Histone"/>
    <property type="match status" value="1"/>
</dbReference>
<dbReference type="PRINTS" id="PR00621">
    <property type="entry name" value="HISTONEH2B"/>
</dbReference>
<dbReference type="SMART" id="SM00427">
    <property type="entry name" value="H2B"/>
    <property type="match status" value="1"/>
</dbReference>
<dbReference type="SUPFAM" id="SSF47113">
    <property type="entry name" value="Histone-fold"/>
    <property type="match status" value="1"/>
</dbReference>
<dbReference type="PROSITE" id="PS00357">
    <property type="entry name" value="HISTONE_H2B"/>
    <property type="match status" value="1"/>
</dbReference>
<organism>
    <name type="scientific">Mus musculus</name>
    <name type="common">Mouse</name>
    <dbReference type="NCBI Taxonomy" id="10090"/>
    <lineage>
        <taxon>Eukaryota</taxon>
        <taxon>Metazoa</taxon>
        <taxon>Chordata</taxon>
        <taxon>Craniata</taxon>
        <taxon>Vertebrata</taxon>
        <taxon>Euteleostomi</taxon>
        <taxon>Mammalia</taxon>
        <taxon>Eutheria</taxon>
        <taxon>Euarchontoglires</taxon>
        <taxon>Glires</taxon>
        <taxon>Rodentia</taxon>
        <taxon>Myomorpha</taxon>
        <taxon>Muroidea</taxon>
        <taxon>Muridae</taxon>
        <taxon>Murinae</taxon>
        <taxon>Mus</taxon>
        <taxon>Mus</taxon>
    </lineage>
</organism>
<gene>
    <name evidence="16" type="primary">H2bc1</name>
    <name evidence="16" type="synonym">Hist1h2ba</name>
    <name evidence="14" type="synonym">Th2b</name>
</gene>
<feature type="initiator methionine" description="Removed" evidence="1">
    <location>
        <position position="1"/>
    </location>
</feature>
<feature type="chain" id="PRO_0000071843" description="Histone H2B type 1-A">
    <location>
        <begin position="2"/>
        <end position="127"/>
    </location>
</feature>
<feature type="modified residue" description="N-acetylproline" evidence="1">
    <location>
        <position position="2"/>
    </location>
</feature>
<feature type="modified residue" description="N6-acetyllysine; alternate" evidence="8">
    <location>
        <position position="7"/>
    </location>
</feature>
<feature type="modified residue" description="N6-crotonyllysine; alternate" evidence="9">
    <location>
        <position position="7"/>
    </location>
</feature>
<feature type="modified residue" description="N6-lactoyllysine; alternate" evidence="12">
    <location>
        <position position="7"/>
    </location>
</feature>
<feature type="modified residue" description="N6-acetyllysine; alternate" evidence="4">
    <location>
        <position position="13"/>
    </location>
</feature>
<feature type="modified residue" description="N6-crotonyllysine; alternate" evidence="9">
    <location>
        <position position="13"/>
    </location>
</feature>
<feature type="modified residue" description="N6-lactoyllysine; alternate" evidence="12">
    <location>
        <position position="13"/>
    </location>
</feature>
<feature type="modified residue" description="N6-acetyllysine; alternate" evidence="8">
    <location>
        <position position="14"/>
    </location>
</feature>
<feature type="modified residue" description="N6-crotonyllysine; alternate" evidence="9">
    <location>
        <position position="14"/>
    </location>
</feature>
<feature type="modified residue" description="N6-acetyllysine; alternate" evidence="8">
    <location>
        <position position="17"/>
    </location>
</feature>
<feature type="modified residue" description="N6-crotonyllysine; alternate" evidence="9">
    <location>
        <position position="17"/>
    </location>
</feature>
<feature type="modified residue" description="N6-lactoyllysine; alternate" evidence="12">
    <location>
        <position position="17"/>
    </location>
</feature>
<feature type="modified residue" description="N6-acetyllysine; alternate" evidence="5">
    <location>
        <position position="18"/>
    </location>
</feature>
<feature type="modified residue" description="N6-crotonyllysine; alternate" evidence="9">
    <location>
        <position position="18"/>
    </location>
</feature>
<feature type="modified residue" description="N6-lactoyllysine; alternate" evidence="12">
    <location>
        <position position="18"/>
    </location>
</feature>
<feature type="modified residue" description="N6-acetyllysine; alternate" evidence="8">
    <location>
        <position position="22"/>
    </location>
</feature>
<feature type="modified residue" description="N6-crotonyllysine; alternate" evidence="9">
    <location>
        <position position="22"/>
    </location>
</feature>
<feature type="modified residue" description="N6-lactoyllysine; alternate" evidence="12">
    <location>
        <position position="22"/>
    </location>
</feature>
<feature type="modified residue" description="N6-acetyllysine; alternate" evidence="2">
    <location>
        <position position="25"/>
    </location>
</feature>
<feature type="modified residue" description="N6-crotonyllysine; alternate" evidence="9">
    <location>
        <position position="25"/>
    </location>
</feature>
<feature type="modified residue" description="N6-lactoyllysine; alternate" evidence="2">
    <location>
        <position position="25"/>
    </location>
</feature>
<feature type="modified residue" description="N6-crotonyllysine; alternate" evidence="9">
    <location>
        <position position="36"/>
    </location>
</feature>
<feature type="modified residue" description="N6-succinyllysine; alternate" evidence="2">
    <location>
        <position position="36"/>
    </location>
</feature>
<feature type="modified residue" description="Phosphoserine" evidence="7">
    <location>
        <position position="38"/>
    </location>
</feature>
<feature type="modified residue" description="N6-lactoyllysine; alternate" evidence="2">
    <location>
        <position position="45"/>
    </location>
</feature>
<feature type="modified residue" description="N6-methyllysine" evidence="4">
    <location>
        <position position="48"/>
    </location>
</feature>
<feature type="modified residue" description="N6,N6-dimethyllysine" evidence="4">
    <location>
        <position position="59"/>
    </location>
</feature>
<feature type="modified residue" description="Dimethylated arginine" evidence="8">
    <location>
        <position position="81"/>
    </location>
</feature>
<feature type="modified residue" description="N6,N6,N6-trimethyllysine; alternate" evidence="8">
    <location>
        <position position="87"/>
    </location>
</feature>
<feature type="modified residue" description="N6-acetyllysine; alternate" evidence="8">
    <location>
        <position position="87"/>
    </location>
</feature>
<feature type="modified residue" description="N6-lactoyllysine; alternate" evidence="12">
    <location>
        <position position="87"/>
    </location>
</feature>
<feature type="modified residue" description="Omega-N-methylarginine" evidence="8">
    <location>
        <position position="88"/>
    </location>
</feature>
<feature type="modified residue" description="Omega-N-methylarginine" evidence="8">
    <location>
        <position position="94"/>
    </location>
</feature>
<feature type="modified residue" description="N6-lactoyllysine; alternate" evidence="12">
    <location>
        <position position="110"/>
    </location>
</feature>
<feature type="modified residue" description="N6-methyllysine" evidence="4">
    <location>
        <position position="110"/>
    </location>
</feature>
<feature type="modified residue" description="Phosphothreonine" evidence="5">
    <location>
        <position position="117"/>
    </location>
</feature>
<feature type="modified residue" description="N6-lactoyllysine; alternate" evidence="12">
    <location>
        <position position="118"/>
    </location>
</feature>
<feature type="modified residue" description="N6-methylated lysine; alternate" evidence="5">
    <location>
        <position position="118"/>
    </location>
</feature>
<feature type="modified residue" description="N6-succinyllysine; alternate" evidence="2">
    <location>
        <position position="118"/>
    </location>
</feature>
<feature type="modified residue" description="N6-lactoyllysine; alternate" evidence="2">
    <location>
        <position position="122"/>
    </location>
</feature>
<feature type="modified residue" description="N6-succinyllysine; alternate" evidence="2">
    <location>
        <position position="122"/>
    </location>
</feature>
<feature type="cross-link" description="Glycyl lysine isopeptide (Lys-Gly) (interchain with G-Cter in SUMO2); alternate" evidence="3">
    <location>
        <position position="7"/>
    </location>
</feature>
<feature type="cross-link" description="Glycyl lysine isopeptide (Lys-Gly) (interchain with G-Cter in SUMO2); alternate" evidence="6">
    <location>
        <position position="22"/>
    </location>
</feature>
<feature type="cross-link" description="Glycyl lysine isopeptide (Lys-Gly) (interchain with G-Cter in ubiquitin); alternate" evidence="2">
    <location>
        <position position="36"/>
    </location>
</feature>
<feature type="cross-link" description="Glycyl lysine isopeptide (Lys-Gly) (interchain with G-Cter in ubiquitin); alternate" evidence="8">
    <location>
        <position position="122"/>
    </location>
</feature>
<feature type="helix" evidence="17">
    <location>
        <begin position="40"/>
        <end position="50"/>
    </location>
</feature>
<feature type="helix" evidence="17">
    <location>
        <begin position="58"/>
        <end position="85"/>
    </location>
</feature>
<feature type="strand" evidence="18">
    <location>
        <begin position="89"/>
        <end position="91"/>
    </location>
</feature>
<feature type="helix" evidence="17">
    <location>
        <begin position="93"/>
        <end position="103"/>
    </location>
</feature>
<feature type="helix" evidence="17">
    <location>
        <begin position="106"/>
        <end position="124"/>
    </location>
</feature>
<name>H2B1A_MOUSE</name>
<comment type="function">
    <text evidence="10 11">Variant histone specifically required to direct the transformation of dissociating nucleosomes to protamine in male germ cells (PubMed:23884607, PubMed:28366643). Entirely replaces classical histone H2B prior nucleosome to protamine transition and probably acts as a nucleosome dissociating factor that creates a more dynamic chromatin, facilitating the large-scale exchange of histones (PubMed:23884607). In condensing spermatids, the heterodimer between H2AB1 and H2BC1/TH2B is loaded onto the nucleosomes and promotes loading of transition proteins (TNP1 and TNP2) onto the nucleosomes (PubMed:28366643). Inclusion of the H2AB1-H2BC1/TH2B dimer into chromatin opens the nucleosomes, releasing the nucleosomal DNA ends and allowing the invasion of nucleosomes by transition proteins (TNP1 and TNP2) (PubMed:28366643). Then, transition proteins drive the recruitment and processing of protamines, which are responsible for histone eviction (PubMed:28366643). Also expressed maternally and is present in the female pronucleus, suggesting a similar role in protamine replacement by nucleosomes at fertilization (PubMed:23884607). Core component of nucleosome. Nucleosomes wrap and compact DNA into chromatin, limiting DNA accessibility to the cellular machineries which require DNA as a template. Histones thereby play a central role in transcription regulation, DNA repair, DNA replication and chromosomal stability. DNA accessibility is regulated via a complex set of post-translational modifications of histones, also called histone code, and nucleosome remodeling.</text>
</comment>
<comment type="subunit">
    <text evidence="10 11">The nucleosome is a histone octamer containing two molecules each of H2A, H2B, H3 and H4 assembled in one H3-H4 heterotetramer and two H2A-H2B heterodimers (PubMed:23884607). Interacts with H2AB1; preferentially dimerizes with H2AB1 to form nucleosomes (PubMed:28366643).</text>
</comment>
<comment type="subcellular location">
    <subcellularLocation>
        <location evidence="10">Nucleus</location>
    </subcellularLocation>
    <subcellularLocation>
        <location evidence="10">Chromosome</location>
    </subcellularLocation>
</comment>
<comment type="tissue specificity">
    <text evidence="10 13">Mainly expressed in testis, and the corresponding protein is also present in mature sperm. Also present in metaphase oocytes (at protein level).</text>
</comment>
<comment type="developmental stage">
    <text evidence="10">Accumulates at 10 day postpartum (dpp), when pre-leptotene/leptotene spermatocytes first appear and when H2B expression shows a drastic decrease. Replaces H2B by 18 dpp in spermatocytes. Also present in metaphase oocytes and in the female pronucleus at fertilization and is also rapidly incorporated into the male pronucleus.</text>
</comment>
<comment type="PTM">
    <text evidence="8">Monoubiquitination at Lys-36 by the MSL1/MSL2 dimer is required for histone H3 'Lys-4' (H3K4me) and 'Lys-79' (H3K79me) methylation and transcription activation at specific gene loci, such as HOXA9 and MEIS1 loci. Similarly, monoubiquitination of Lys-122 (H2BK120Ub) by the RNF20/40 complex gives a specific tag for epigenetic transcriptional activation and is also prerequisite for histone H3 'Lys-4' and 'Lys-79' methylation. It also functions cooperatively with the FACT dimer to stimulate elongation by RNA polymerase II. H2BK120Ub also acts as a regulator of mRNA splicing: deubiquitination by USP49 is required for efficient cotranscriptional splicing of a large set of exons (By similarity).</text>
</comment>
<comment type="PTM">
    <text evidence="9">Crotonylation (Kcr) is specifically present in male germ cells and marks testis-specific genes in post-meiotic cells, including X-linked genes that escape sex chromosome inactivation in haploid cells. Crotonylation marks active promoters and enhancers and confers resistance to transcriptional repressors. It is also associated with post-meiotically activated genes on autosomes.</text>
</comment>
<comment type="PTM">
    <text evidence="5">Acetylated during spermatogenesis. Acetylated form is most abundant in spermatogonia compared to spermatocytes and round spermatids (By similarity).</text>
</comment>
<comment type="PTM">
    <text evidence="5">Phosphorylated at Thr-117 in spermatogonia, spermatocytes and round spermatids.</text>
</comment>
<comment type="PTM">
    <text evidence="5">Methylated at Lys-118 in spermatogonia, spermatocytes and round spermatids.</text>
</comment>
<comment type="PTM">
    <text evidence="2">Lactylated in macrophages by EP300/P300 by using lactoyl-CoA directly derived from endogenous or exogenous lactate, leading to stimulates gene transcription.</text>
</comment>
<comment type="similarity">
    <text evidence="15">Belongs to the histone H2B family.</text>
</comment>
<keyword id="KW-0002">3D-structure</keyword>
<keyword id="KW-0007">Acetylation</keyword>
<keyword id="KW-0158">Chromosome</keyword>
<keyword id="KW-0238">DNA-binding</keyword>
<keyword id="KW-1017">Isopeptide bond</keyword>
<keyword id="KW-0488">Methylation</keyword>
<keyword id="KW-0544">Nucleosome core</keyword>
<keyword id="KW-0539">Nucleus</keyword>
<keyword id="KW-0597">Phosphoprotein</keyword>
<keyword id="KW-1185">Reference proteome</keyword>
<keyword id="KW-0832">Ubl conjugation</keyword>